<feature type="chain" id="PRO_0000192669" description="Sec-independent protein translocase protein TatB">
    <location>
        <begin position="1"/>
        <end position="182"/>
    </location>
</feature>
<feature type="transmembrane region" description="Helical" evidence="1">
    <location>
        <begin position="1"/>
        <end position="21"/>
    </location>
</feature>
<feature type="region of interest" description="Disordered" evidence="2">
    <location>
        <begin position="87"/>
        <end position="107"/>
    </location>
</feature>
<feature type="region of interest" description="Disordered" evidence="2">
    <location>
        <begin position="121"/>
        <end position="182"/>
    </location>
</feature>
<feature type="compositionally biased region" description="Low complexity" evidence="2">
    <location>
        <begin position="168"/>
        <end position="182"/>
    </location>
</feature>
<evidence type="ECO:0000255" key="1">
    <source>
        <dbReference type="HAMAP-Rule" id="MF_00237"/>
    </source>
</evidence>
<evidence type="ECO:0000256" key="2">
    <source>
        <dbReference type="SAM" id="MobiDB-lite"/>
    </source>
</evidence>
<evidence type="ECO:0000305" key="3"/>
<comment type="function">
    <text evidence="1">Part of the twin-arginine translocation (Tat) system that transports large folded proteins containing a characteristic twin-arginine motif in their signal peptide across membranes. Together with TatC, TatB is part of a receptor directly interacting with Tat signal peptides. TatB may form an oligomeric binding site that transiently accommodates folded Tat precursor proteins before their translocation.</text>
</comment>
<comment type="subunit">
    <text evidence="1">The Tat system comprises two distinct complexes: a TatABC complex, containing multiple copies of TatA, TatB and TatC subunits, and a separate TatA complex, containing only TatA subunits. Substrates initially bind to the TatABC complex, which probably triggers association of the separate TatA complex to form the active translocon.</text>
</comment>
<comment type="subcellular location">
    <subcellularLocation>
        <location evidence="1">Cell inner membrane</location>
        <topology evidence="1">Single-pass membrane protein</topology>
    </subcellularLocation>
</comment>
<comment type="similarity">
    <text evidence="1">Belongs to the TatB family.</text>
</comment>
<comment type="sequence caution" evidence="3">
    <conflict type="erroneous initiation">
        <sequence resource="EMBL-CDS" id="AAF33490"/>
    </conflict>
</comment>
<proteinExistence type="inferred from homology"/>
<protein>
    <recommendedName>
        <fullName evidence="1">Sec-independent protein translocase protein TatB</fullName>
    </recommendedName>
</protein>
<reference key="1">
    <citation type="journal article" date="2001" name="Nature">
        <title>Complete genome sequence of Salmonella enterica serovar Typhimurium LT2.</title>
        <authorList>
            <person name="McClelland M."/>
            <person name="Sanderson K.E."/>
            <person name="Spieth J."/>
            <person name="Clifton S.W."/>
            <person name="Latreille P."/>
            <person name="Courtney L."/>
            <person name="Porwollik S."/>
            <person name="Ali J."/>
            <person name="Dante M."/>
            <person name="Du F."/>
            <person name="Hou S."/>
            <person name="Layman D."/>
            <person name="Leonard S."/>
            <person name="Nguyen C."/>
            <person name="Scott K."/>
            <person name="Holmes A."/>
            <person name="Grewal N."/>
            <person name="Mulvaney E."/>
            <person name="Ryan E."/>
            <person name="Sun H."/>
            <person name="Florea L."/>
            <person name="Miller W."/>
            <person name="Stoneking T."/>
            <person name="Nhan M."/>
            <person name="Waterston R."/>
            <person name="Wilson R.K."/>
        </authorList>
    </citation>
    <scope>NUCLEOTIDE SEQUENCE [LARGE SCALE GENOMIC DNA]</scope>
    <source>
        <strain>LT2 / SGSC1412 / ATCC 700720</strain>
    </source>
</reference>
<dbReference type="EMBL" id="AF233324">
    <property type="protein sequence ID" value="AAF33490.1"/>
    <property type="status" value="ALT_INIT"/>
    <property type="molecule type" value="Genomic_DNA"/>
</dbReference>
<dbReference type="EMBL" id="AE006468">
    <property type="protein sequence ID" value="AAL22818.1"/>
    <property type="molecule type" value="Genomic_DNA"/>
</dbReference>
<dbReference type="RefSeq" id="NP_462859.1">
    <property type="nucleotide sequence ID" value="NC_003197.2"/>
</dbReference>
<dbReference type="RefSeq" id="WP_000459612.1">
    <property type="nucleotide sequence ID" value="NC_003197.2"/>
</dbReference>
<dbReference type="SMR" id="P57048"/>
<dbReference type="STRING" id="99287.STM3974"/>
<dbReference type="PaxDb" id="99287-STM3974"/>
<dbReference type="DNASU" id="1255500"/>
<dbReference type="GeneID" id="1255500"/>
<dbReference type="KEGG" id="stm:STM3974"/>
<dbReference type="PATRIC" id="fig|99287.12.peg.4193"/>
<dbReference type="HOGENOM" id="CLU_086034_1_0_6"/>
<dbReference type="OMA" id="ADQPRTH"/>
<dbReference type="PhylomeDB" id="P57048"/>
<dbReference type="BioCyc" id="SENT99287:STM3974-MONOMER"/>
<dbReference type="Proteomes" id="UP000001014">
    <property type="component" value="Chromosome"/>
</dbReference>
<dbReference type="GO" id="GO:0033281">
    <property type="term" value="C:TAT protein transport complex"/>
    <property type="evidence" value="ECO:0007669"/>
    <property type="project" value="UniProtKB-UniRule"/>
</dbReference>
<dbReference type="GO" id="GO:0008320">
    <property type="term" value="F:protein transmembrane transporter activity"/>
    <property type="evidence" value="ECO:0007669"/>
    <property type="project" value="UniProtKB-UniRule"/>
</dbReference>
<dbReference type="GO" id="GO:0043953">
    <property type="term" value="P:protein transport by the Tat complex"/>
    <property type="evidence" value="ECO:0007669"/>
    <property type="project" value="UniProtKB-UniRule"/>
</dbReference>
<dbReference type="FunFam" id="1.20.5.3310:FF:000002">
    <property type="entry name" value="Sec-independent protein translocase protein TatB"/>
    <property type="match status" value="1"/>
</dbReference>
<dbReference type="Gene3D" id="1.20.5.3310">
    <property type="match status" value="1"/>
</dbReference>
<dbReference type="HAMAP" id="MF_00237">
    <property type="entry name" value="TatB"/>
    <property type="match status" value="1"/>
</dbReference>
<dbReference type="InterPro" id="IPR018448">
    <property type="entry name" value="TatB"/>
</dbReference>
<dbReference type="NCBIfam" id="TIGR01410">
    <property type="entry name" value="tatB"/>
    <property type="match status" value="1"/>
</dbReference>
<dbReference type="PANTHER" id="PTHR33162">
    <property type="entry name" value="SEC-INDEPENDENT PROTEIN TRANSLOCASE PROTEIN TATA, CHLOROPLASTIC"/>
    <property type="match status" value="1"/>
</dbReference>
<dbReference type="PANTHER" id="PTHR33162:SF1">
    <property type="entry name" value="SEC-INDEPENDENT PROTEIN TRANSLOCASE PROTEIN TATA, CHLOROPLASTIC"/>
    <property type="match status" value="1"/>
</dbReference>
<dbReference type="PRINTS" id="PR01506">
    <property type="entry name" value="TATBPROTEIN"/>
</dbReference>
<sequence>MFDIGFSELLLVFVIGLIVLGPQRLPVAVKTVAGWIRALRSLATTVQNELTQELKLQEFQDSLKKVEKASLENLTPELKASMDELRQAAESMKRTYSANDPEQASDEAHTIHNPVVKGNETQHEGVTPAAAETQASAPEQKPEPVKANVPESTETASVATIDAEKKSAAPVVESSPSSSDKP</sequence>
<accession>P57048</accession>
<name>TATB_SALTY</name>
<organism>
    <name type="scientific">Salmonella typhimurium (strain LT2 / SGSC1412 / ATCC 700720)</name>
    <dbReference type="NCBI Taxonomy" id="99287"/>
    <lineage>
        <taxon>Bacteria</taxon>
        <taxon>Pseudomonadati</taxon>
        <taxon>Pseudomonadota</taxon>
        <taxon>Gammaproteobacteria</taxon>
        <taxon>Enterobacterales</taxon>
        <taxon>Enterobacteriaceae</taxon>
        <taxon>Salmonella</taxon>
    </lineage>
</organism>
<keyword id="KW-0997">Cell inner membrane</keyword>
<keyword id="KW-1003">Cell membrane</keyword>
<keyword id="KW-0472">Membrane</keyword>
<keyword id="KW-0653">Protein transport</keyword>
<keyword id="KW-1185">Reference proteome</keyword>
<keyword id="KW-0811">Translocation</keyword>
<keyword id="KW-0812">Transmembrane</keyword>
<keyword id="KW-1133">Transmembrane helix</keyword>
<keyword id="KW-0813">Transport</keyword>
<gene>
    <name evidence="1" type="primary">tatB</name>
    <name type="ordered locus">STM3974</name>
    <name type="ORF">STMD1.15</name>
</gene>